<reference key="1">
    <citation type="journal article" date="2001" name="Proc. Natl. Acad. Sci. U.S.A.">
        <title>Genome sequence of an industrial microorganism Streptomyces avermitilis: deducing the ability of producing secondary metabolites.</title>
        <authorList>
            <person name="Omura S."/>
            <person name="Ikeda H."/>
            <person name="Ishikawa J."/>
            <person name="Hanamoto A."/>
            <person name="Takahashi C."/>
            <person name="Shinose M."/>
            <person name="Takahashi Y."/>
            <person name="Horikawa H."/>
            <person name="Nakazawa H."/>
            <person name="Osonoe T."/>
            <person name="Kikuchi H."/>
            <person name="Shiba T."/>
            <person name="Sakaki Y."/>
            <person name="Hattori M."/>
        </authorList>
    </citation>
    <scope>NUCLEOTIDE SEQUENCE [LARGE SCALE GENOMIC DNA]</scope>
    <source>
        <strain>ATCC 31267 / DSM 46492 / JCM 5070 / NBRC 14893 / NCIMB 12804 / NRRL 8165 / MA-4680</strain>
    </source>
</reference>
<reference key="2">
    <citation type="journal article" date="2003" name="Nat. Biotechnol.">
        <title>Complete genome sequence and comparative analysis of the industrial microorganism Streptomyces avermitilis.</title>
        <authorList>
            <person name="Ikeda H."/>
            <person name="Ishikawa J."/>
            <person name="Hanamoto A."/>
            <person name="Shinose M."/>
            <person name="Kikuchi H."/>
            <person name="Shiba T."/>
            <person name="Sakaki Y."/>
            <person name="Hattori M."/>
            <person name="Omura S."/>
        </authorList>
    </citation>
    <scope>NUCLEOTIDE SEQUENCE [LARGE SCALE GENOMIC DNA]</scope>
    <source>
        <strain>ATCC 31267 / DSM 46492 / JCM 5070 / NBRC 14893 / NCIMB 12804 / NRRL 8165 / MA-4680</strain>
    </source>
</reference>
<organism>
    <name type="scientific">Streptomyces avermitilis (strain ATCC 31267 / DSM 46492 / JCM 5070 / NBRC 14893 / NCIMB 12804 / NRRL 8165 / MA-4680)</name>
    <dbReference type="NCBI Taxonomy" id="227882"/>
    <lineage>
        <taxon>Bacteria</taxon>
        <taxon>Bacillati</taxon>
        <taxon>Actinomycetota</taxon>
        <taxon>Actinomycetes</taxon>
        <taxon>Kitasatosporales</taxon>
        <taxon>Streptomycetaceae</taxon>
        <taxon>Streptomyces</taxon>
    </lineage>
</organism>
<comment type="cofactor">
    <cofactor evidence="1">
        <name>Zn(2+)</name>
        <dbReference type="ChEBI" id="CHEBI:29105"/>
    </cofactor>
</comment>
<comment type="similarity">
    <text evidence="1">Belongs to the peptidase M18 family.</text>
</comment>
<protein>
    <recommendedName>
        <fullName evidence="1">Probable M18 family aminopeptidase 2</fullName>
        <ecNumber evidence="1">3.4.11.-</ecNumber>
    </recommendedName>
</protein>
<name>APEB_STRAW</name>
<sequence>MSNPVRFDRGHTDDLMSFLAASPSPYHAVTNAAERLEKAGFRQVAETDAWDSTSGGKYVVRGGALIAWYVPEGADPHTPFRIVGAHTDSPNLRVKPRPDSGAHGWRQIAVEIYGGPLLNSWLDRDLGLAGRLSLRDGSTRLVNIDRPLLRVPQLAIHLDRSVSTDGLKLDKQRHLQPIWGLGGDVRDGDLIAFLEAELGLSAGEVTGWDLMTHSVEAPSYLGRDNELLAGPRMDNLLSVHAGTAALTAVAAADASLAYIPVLAAFDHEENGSQSDTGADGPLLGSVLERSVFARSGSYEDRARAFAGSVCLSSDTGHAVHPNYAERHDPTHHPRAGGGPILKVNVNNRYATDGSGRAIFAAACEKANVPFQTFVSNNSMPCGTTIGPITAARHGIRTVDIGAAILSMHSARELCATDDPFLLANSLVAFLEG</sequence>
<accession>Q82F74</accession>
<proteinExistence type="inferred from homology"/>
<evidence type="ECO:0000255" key="1">
    <source>
        <dbReference type="HAMAP-Rule" id="MF_00467"/>
    </source>
</evidence>
<feature type="chain" id="PRO_0000173468" description="Probable M18 family aminopeptidase 2">
    <location>
        <begin position="1"/>
        <end position="432"/>
    </location>
</feature>
<feature type="binding site" evidence="1">
    <location>
        <position position="86"/>
    </location>
    <ligand>
        <name>Zn(2+)</name>
        <dbReference type="ChEBI" id="CHEBI:29105"/>
    </ligand>
</feature>
<feature type="binding site" evidence="1">
    <location>
        <position position="157"/>
    </location>
    <ligand>
        <name>Zn(2+)</name>
        <dbReference type="ChEBI" id="CHEBI:29105"/>
    </ligand>
</feature>
<feature type="binding site" evidence="1">
    <location>
        <position position="408"/>
    </location>
    <ligand>
        <name>Zn(2+)</name>
        <dbReference type="ChEBI" id="CHEBI:29105"/>
    </ligand>
</feature>
<gene>
    <name evidence="1" type="primary">apeB</name>
    <name type="ordered locus">SAV_4389</name>
</gene>
<keyword id="KW-0031">Aminopeptidase</keyword>
<keyword id="KW-0378">Hydrolase</keyword>
<keyword id="KW-0479">Metal-binding</keyword>
<keyword id="KW-0482">Metalloprotease</keyword>
<keyword id="KW-0645">Protease</keyword>
<keyword id="KW-1185">Reference proteome</keyword>
<keyword id="KW-0862">Zinc</keyword>
<dbReference type="EC" id="3.4.11.-" evidence="1"/>
<dbReference type="EMBL" id="BA000030">
    <property type="protein sequence ID" value="BAC72101.1"/>
    <property type="molecule type" value="Genomic_DNA"/>
</dbReference>
<dbReference type="RefSeq" id="WP_010985814.1">
    <property type="nucleotide sequence ID" value="NZ_JZJK01000079.1"/>
</dbReference>
<dbReference type="SMR" id="Q82F74"/>
<dbReference type="GeneID" id="41541470"/>
<dbReference type="KEGG" id="sma:SAVERM_4389"/>
<dbReference type="eggNOG" id="COG1362">
    <property type="taxonomic scope" value="Bacteria"/>
</dbReference>
<dbReference type="HOGENOM" id="CLU_019532_2_0_11"/>
<dbReference type="OrthoDB" id="5288740at2"/>
<dbReference type="Proteomes" id="UP000000428">
    <property type="component" value="Chromosome"/>
</dbReference>
<dbReference type="GO" id="GO:0005737">
    <property type="term" value="C:cytoplasm"/>
    <property type="evidence" value="ECO:0007669"/>
    <property type="project" value="UniProtKB-ARBA"/>
</dbReference>
<dbReference type="GO" id="GO:0004177">
    <property type="term" value="F:aminopeptidase activity"/>
    <property type="evidence" value="ECO:0007669"/>
    <property type="project" value="UniProtKB-UniRule"/>
</dbReference>
<dbReference type="GO" id="GO:0008237">
    <property type="term" value="F:metallopeptidase activity"/>
    <property type="evidence" value="ECO:0007669"/>
    <property type="project" value="UniProtKB-UniRule"/>
</dbReference>
<dbReference type="GO" id="GO:0008270">
    <property type="term" value="F:zinc ion binding"/>
    <property type="evidence" value="ECO:0007669"/>
    <property type="project" value="UniProtKB-UniRule"/>
</dbReference>
<dbReference type="GO" id="GO:0006508">
    <property type="term" value="P:proteolysis"/>
    <property type="evidence" value="ECO:0007669"/>
    <property type="project" value="UniProtKB-UniRule"/>
</dbReference>
<dbReference type="CDD" id="cd05658">
    <property type="entry name" value="M18_DAP"/>
    <property type="match status" value="1"/>
</dbReference>
<dbReference type="FunFam" id="2.30.250.10:FF:000004">
    <property type="entry name" value="Probable M18 family aminopeptidase 2"/>
    <property type="match status" value="1"/>
</dbReference>
<dbReference type="Gene3D" id="2.30.250.10">
    <property type="entry name" value="Aminopeptidase i, Domain 2"/>
    <property type="match status" value="1"/>
</dbReference>
<dbReference type="Gene3D" id="3.40.630.10">
    <property type="entry name" value="Zn peptidases"/>
    <property type="match status" value="1"/>
</dbReference>
<dbReference type="HAMAP" id="MF_00467">
    <property type="entry name" value="Aminopeptidase_M18_2"/>
    <property type="match status" value="1"/>
</dbReference>
<dbReference type="InterPro" id="IPR022984">
    <property type="entry name" value="M18_aminopeptidase_2"/>
</dbReference>
<dbReference type="InterPro" id="IPR001948">
    <property type="entry name" value="Peptidase_M18"/>
</dbReference>
<dbReference type="InterPro" id="IPR023358">
    <property type="entry name" value="Peptidase_M18_dom2"/>
</dbReference>
<dbReference type="NCBIfam" id="NF002759">
    <property type="entry name" value="PRK02813.1"/>
    <property type="match status" value="1"/>
</dbReference>
<dbReference type="PANTHER" id="PTHR28570">
    <property type="entry name" value="ASPARTYL AMINOPEPTIDASE"/>
    <property type="match status" value="1"/>
</dbReference>
<dbReference type="PANTHER" id="PTHR28570:SF3">
    <property type="entry name" value="ASPARTYL AMINOPEPTIDASE"/>
    <property type="match status" value="1"/>
</dbReference>
<dbReference type="Pfam" id="PF02127">
    <property type="entry name" value="Peptidase_M18"/>
    <property type="match status" value="1"/>
</dbReference>
<dbReference type="PRINTS" id="PR00932">
    <property type="entry name" value="AMINO1PTASE"/>
</dbReference>
<dbReference type="SUPFAM" id="SSF101821">
    <property type="entry name" value="Aminopeptidase/glucanase lid domain"/>
    <property type="match status" value="1"/>
</dbReference>
<dbReference type="SUPFAM" id="SSF53187">
    <property type="entry name" value="Zn-dependent exopeptidases"/>
    <property type="match status" value="1"/>
</dbReference>